<geneLocation type="chloroplast"/>
<feature type="chain" id="PRO_0000143366" description="Maturase K">
    <location>
        <begin position="1"/>
        <end position="514"/>
    </location>
</feature>
<keyword id="KW-0150">Chloroplast</keyword>
<keyword id="KW-0507">mRNA processing</keyword>
<keyword id="KW-0934">Plastid</keyword>
<keyword id="KW-0694">RNA-binding</keyword>
<keyword id="KW-0819">tRNA processing</keyword>
<sequence>MKIDEFQGYLELDRSWQDSFLYPLSFQEYIYALAHDHGLNRTILLENAGYENKYNFLIVKRLIIRMYRQNQFILSTNDFQQNIFFASPQKIYSQVIAEVFSVIVEIPFSLRLLFSLEGKQIRKSHNLRSIHSIFPFLEDQFSHLNYVLDIRIPHPVHLEILVQTLRYWVKDAPSLHLLRFFLYESHNWNSFFSLKKNISFLKKRNQRFFLFLYNSHVCEYESIFFFICNQSSHLQSTFYGSLIERIHFYGKVEHLVKVFTKNFQVILWFFQDPLMHYVRYQGKSILASKATSLLINKWKYYLVNFWQCYFSVWSQPKRIYINQLSKNSLDFTGFLSSVCLNTSVVRSQMLENSFIMDNAINKFDTIVPSIPLIGSLSKAKFCNVLGHPISKPVWTDLSDSEIIDRFGXICRSISHYYSGSSKKTSLYRIKYILRLSCARTLARKHKSTVRSFLKRLGSEFLEEFFTEEEKVLSFLLPRDYSISQRLYRGRIWYLDIFCIHDFANHEWLVMRLSK</sequence>
<gene>
    <name evidence="1" type="primary">matK</name>
</gene>
<name>MATK_DROLU</name>
<accession>Q5J2U8</accession>
<comment type="function">
    <text evidence="1">Usually encoded in the trnK tRNA gene intron. Probably assists in splicing its own and other chloroplast group II introns.</text>
</comment>
<comment type="subcellular location">
    <subcellularLocation>
        <location>Plastid</location>
        <location>Chloroplast</location>
    </subcellularLocation>
</comment>
<comment type="similarity">
    <text evidence="1">Belongs to the intron maturase 2 family. MatK subfamily.</text>
</comment>
<dbReference type="EMBL" id="AY514860">
    <property type="protein sequence ID" value="AAT28290.1"/>
    <property type="molecule type" value="Genomic_DNA"/>
</dbReference>
<dbReference type="GO" id="GO:0009507">
    <property type="term" value="C:chloroplast"/>
    <property type="evidence" value="ECO:0007669"/>
    <property type="project" value="UniProtKB-SubCell"/>
</dbReference>
<dbReference type="GO" id="GO:0003723">
    <property type="term" value="F:RNA binding"/>
    <property type="evidence" value="ECO:0007669"/>
    <property type="project" value="UniProtKB-KW"/>
</dbReference>
<dbReference type="GO" id="GO:0006397">
    <property type="term" value="P:mRNA processing"/>
    <property type="evidence" value="ECO:0007669"/>
    <property type="project" value="UniProtKB-KW"/>
</dbReference>
<dbReference type="GO" id="GO:0008380">
    <property type="term" value="P:RNA splicing"/>
    <property type="evidence" value="ECO:0007669"/>
    <property type="project" value="UniProtKB-UniRule"/>
</dbReference>
<dbReference type="GO" id="GO:0008033">
    <property type="term" value="P:tRNA processing"/>
    <property type="evidence" value="ECO:0007669"/>
    <property type="project" value="UniProtKB-KW"/>
</dbReference>
<dbReference type="HAMAP" id="MF_01390">
    <property type="entry name" value="MatK"/>
    <property type="match status" value="1"/>
</dbReference>
<dbReference type="InterPro" id="IPR024937">
    <property type="entry name" value="Domain_X"/>
</dbReference>
<dbReference type="InterPro" id="IPR002866">
    <property type="entry name" value="Maturase_MatK"/>
</dbReference>
<dbReference type="InterPro" id="IPR024942">
    <property type="entry name" value="Maturase_MatK_N"/>
</dbReference>
<dbReference type="PANTHER" id="PTHR34811">
    <property type="entry name" value="MATURASE K"/>
    <property type="match status" value="1"/>
</dbReference>
<dbReference type="PANTHER" id="PTHR34811:SF1">
    <property type="entry name" value="MATURASE K"/>
    <property type="match status" value="1"/>
</dbReference>
<dbReference type="Pfam" id="PF01348">
    <property type="entry name" value="Intron_maturas2"/>
    <property type="match status" value="1"/>
</dbReference>
<dbReference type="Pfam" id="PF01824">
    <property type="entry name" value="MatK_N"/>
    <property type="match status" value="1"/>
</dbReference>
<organism>
    <name type="scientific">Drosophyllum lusitanicum</name>
    <name type="common">Portuguese sundew</name>
    <name type="synonym">Drosera lusitanica</name>
    <dbReference type="NCBI Taxonomy" id="4373"/>
    <lineage>
        <taxon>Eukaryota</taxon>
        <taxon>Viridiplantae</taxon>
        <taxon>Streptophyta</taxon>
        <taxon>Embryophyta</taxon>
        <taxon>Tracheophyta</taxon>
        <taxon>Spermatophyta</taxon>
        <taxon>Magnoliopsida</taxon>
        <taxon>eudicotyledons</taxon>
        <taxon>Gunneridae</taxon>
        <taxon>Pentapetalae</taxon>
        <taxon>Caryophyllales</taxon>
        <taxon>Drosophyllaceae</taxon>
        <taxon>Drosophyllum</taxon>
    </lineage>
</organism>
<reference key="1">
    <citation type="journal article" date="2005" name="Ann. Mo. Bot. Gard.">
        <title>Phylogenetics of Amaranthaceae based on matK/trnK sequence data -- evidence from parsimony, likelihood, and Bayesian analyses.</title>
        <authorList>
            <person name="Mueller K.F."/>
            <person name="Borsch T."/>
        </authorList>
    </citation>
    <scope>NUCLEOTIDE SEQUENCE [GENOMIC DNA]</scope>
</reference>
<protein>
    <recommendedName>
        <fullName evidence="1">Maturase K</fullName>
    </recommendedName>
    <alternativeName>
        <fullName evidence="1">Intron maturase</fullName>
    </alternativeName>
</protein>
<evidence type="ECO:0000255" key="1">
    <source>
        <dbReference type="HAMAP-Rule" id="MF_01390"/>
    </source>
</evidence>
<proteinExistence type="inferred from homology"/>